<name>CABC2_PROVU</name>
<comment type="function">
    <text evidence="2 3">Broad-specificity glycosaminoglycan lyase, which acts in an exolytic fashion, and preferentially degrades the tetra- and hexasaccharide derivatives of chondroitin sulfate and dermatan sulfate produced by the chondroitin sulfate ABC endolyase, to yield the respective disaccharides. To a lesser extent, is also able to split off disaccharide residues directly from polymeric chondroitin 4- and 6-sulfate, dermatan sulfate, chondroitin, and hyaluronan. Is not active against keratan sulfate, heparan sulfate, and heparin.</text>
</comment>
<comment type="catalytic activity">
    <reaction evidence="2 3">
        <text>Exolytic removal of Delta(4)-unsaturated disaccharide residues from the non-reducing ends of both polymeric chondroitin/dermatan sulfates and their oligosaccharide fragments.</text>
        <dbReference type="EC" id="4.2.2.21"/>
    </reaction>
</comment>
<comment type="activity regulation">
    <text evidence="3">Inhibited by Zn(2+), whereas Ni(2+), Fe(2+), and Cu(2+) have little or no effect on activity.</text>
</comment>
<comment type="biophysicochemical properties">
    <kinetics>
        <KM evidence="2 3">33 uM for chondroitin 6-sulfate tetrasaccharide</KM>
        <KM evidence="2 3">80 uM for chondroitin 6-sulfate</KM>
        <KM evidence="2 3">9.8 uM for chondroitin 6-sulfate</KM>
        <KM evidence="2 3">16.1 uM for chondroitin 4-sulfate</KM>
        <KM evidence="2 3">19.2 uM for dermatan sulfate</KM>
        <Vmax evidence="2 3">155.0 umol/min/mg enzyme with chondroitin 6-sulfate tetrasaccharide as substrate</Vmax>
        <Vmax evidence="2 3">34.0 umol/min/mg enzyme with chondroitin 6-sulfate as substrate</Vmax>
    </kinetics>
    <phDependence>
        <text evidence="2 3">Optimum pH is 8.</text>
    </phDependence>
    <temperatureDependence>
        <text evidence="2 3">Optimum temperature is 40 degrees Celsius (PubMed:9083041). Optimum temperature is 37 degrees Celsius (PubMed:18849565).</text>
    </temperatureDependence>
</comment>
<comment type="similarity">
    <text evidence="4">Belongs to the polysaccharide lyase 8 family.</text>
</comment>
<proteinExistence type="evidence at protein level"/>
<reference key="1">
    <citation type="submission" date="2007-06" db="EMBL/GenBank/DDBJ databases">
        <title>Cloning, recombinant expression, characterization and mutagenesis of chondroitin sulphate ABC exolyase from Proteus vulgaris.</title>
        <authorList>
            <person name="Tam K.-W."/>
            <person name="Wang Q."/>
            <person name="Li R.A."/>
            <person name="Chan Y.-S."/>
            <person name="Shum D.K.-Y."/>
        </authorList>
    </citation>
    <scope>NUCLEOTIDE SEQUENCE [GENOMIC DNA]</scope>
    <source>
        <strain>ATCC 6896 / NBRC 3988 / NCIMB 8065 / NCTC 4636</strain>
    </source>
</reference>
<reference key="2">
    <citation type="journal article" date="1997" name="J. Biol. Chem.">
        <title>Two distinct chondroitin sulfate ABC lyases. An endoeliminase yielding tetrasaccharides and an exoeliminase preferentially acting on oligosaccharides.</title>
        <authorList>
            <person name="Hamai A."/>
            <person name="Hashimoto N."/>
            <person name="Mochizuki H."/>
            <person name="Kato F."/>
            <person name="Makiguchi Y."/>
            <person name="Horie K."/>
            <person name="Suzuki S."/>
        </authorList>
    </citation>
    <scope>FUNCTION</scope>
    <scope>CATALYTIC ACTIVITY</scope>
    <scope>SUBSTRATE SPECIFICITY</scope>
    <scope>ACTIVITY REGULATION</scope>
    <scope>BIOPHYSICOCHEMICAL PROPERTIES</scope>
    <source>
        <strain>ATCC 6896 / NBRC 3988 / NCIMB 8065 / NCTC 4636</strain>
    </source>
</reference>
<reference key="3">
    <citation type="journal article" date="2009" name="J. Biol. Chem.">
        <title>Recombinant expression, purification, and biochemical characterization of chondroitinase ABC II from Proteus vulgaris.</title>
        <authorList>
            <person name="Prabhakar V."/>
            <person name="Capila I."/>
            <person name="Soundararajan V."/>
            <person name="Raman R."/>
            <person name="Sasisekharan R."/>
        </authorList>
    </citation>
    <scope>FUNCTION</scope>
    <scope>CATALYTIC ACTIVITY</scope>
    <scope>SUBSTRATE SPECIFICITY</scope>
    <scope>BIOPHYSICOCHEMICAL PROPERTIES</scope>
    <scope>ACTIVE SITE RESIDUES</scope>
    <scope>MUTAGENESIS OF HIS-343; HIS-452; HIS-453; HIS-456; TYR-460; ARG-513 AND GLU-608</scope>
    <source>
        <strain>ATCC 6896 / NBRC 3988 / NCIMB 8065 / NCTC 4636</strain>
    </source>
</reference>
<feature type="chain" id="PRO_0000413627" description="Chondroitin sulfate ABC exolyase">
    <location>
        <begin position="1" status="less than"/>
        <end position="990"/>
    </location>
</feature>
<feature type="active site" description="Proton acceptor" evidence="5">
    <location>
        <position position="453"/>
    </location>
</feature>
<feature type="active site" description="Proton donor" evidence="1">
    <location>
        <position position="460"/>
    </location>
</feature>
<feature type="site" description="Transition state stabilizer" evidence="1">
    <location>
        <position position="513"/>
    </location>
</feature>
<feature type="site" description="Important for catalytic activity">
    <location>
        <position position="608"/>
    </location>
</feature>
<feature type="mutagenesis site" description="Loss of activity on both chondroitin 6-sulfate and dermatan sulfate." evidence="2">
    <original>H</original>
    <variation>A</variation>
    <location>
        <position position="343"/>
    </location>
</feature>
<feature type="mutagenesis site" description="Slight decrease in substrate affinity, but greatly reduced (100-fold) catalytic efficiency." evidence="2">
    <original>H</original>
    <variation>A</variation>
    <location>
        <position position="452"/>
    </location>
</feature>
<feature type="mutagenesis site" description="Loss of activity on both chondroitin 6-sulfate and dermatan sulfate." evidence="2">
    <original>H</original>
    <variation>A</variation>
    <location>
        <position position="453"/>
    </location>
</feature>
<feature type="mutagenesis site" description="3-fold decrease in catalytic efficiency with both chondroitin 6-sulfate and dermatan sulfate." evidence="2">
    <original>H</original>
    <variation>A</variation>
    <location>
        <position position="456"/>
    </location>
</feature>
<feature type="mutagenesis site" description="Loss of activity on both chondroitin 6-sulfate and dermatan sulfate." evidence="2">
    <original>Y</original>
    <variation>A</variation>
    <location>
        <position position="460"/>
    </location>
</feature>
<feature type="mutagenesis site" description="Loss of activity on both chondroitin 6-sulfate and dermatan sulfate." evidence="2">
    <original>R</original>
    <variation>A</variation>
    <location>
        <position position="513"/>
    </location>
</feature>
<feature type="mutagenesis site" description="Loss of activity on both chondroitin 6-sulfate and dermatan sulfate." evidence="2">
    <original>E</original>
    <variation>A</variation>
    <location>
        <position position="608"/>
    </location>
</feature>
<feature type="non-terminal residue">
    <location>
        <position position="1"/>
    </location>
</feature>
<gene>
    <name type="primary">ChABCII</name>
</gene>
<evidence type="ECO:0000255" key="1"/>
<evidence type="ECO:0000269" key="2">
    <source>
    </source>
</evidence>
<evidence type="ECO:0000269" key="3">
    <source>
    </source>
</evidence>
<evidence type="ECO:0000305" key="4"/>
<evidence type="ECO:0000305" key="5">
    <source>
    </source>
</evidence>
<keyword id="KW-0119">Carbohydrate metabolism</keyword>
<keyword id="KW-0456">Lyase</keyword>
<dbReference type="EC" id="4.2.2.21"/>
<dbReference type="EMBL" id="EF988659">
    <property type="protein sequence ID" value="ABU46331.1"/>
    <property type="molecule type" value="Genomic_DNA"/>
</dbReference>
<dbReference type="SMR" id="C7S340"/>
<dbReference type="STRING" id="585.DR95_2845"/>
<dbReference type="eggNOG" id="ENOG502Z8J1">
    <property type="taxonomic scope" value="Bacteria"/>
</dbReference>
<dbReference type="BioCyc" id="MetaCyc:MONOMER-15789"/>
<dbReference type="GO" id="GO:0005576">
    <property type="term" value="C:extracellular region"/>
    <property type="evidence" value="ECO:0007669"/>
    <property type="project" value="InterPro"/>
</dbReference>
<dbReference type="GO" id="GO:0030246">
    <property type="term" value="F:carbohydrate binding"/>
    <property type="evidence" value="ECO:0007669"/>
    <property type="project" value="InterPro"/>
</dbReference>
<dbReference type="GO" id="GO:0034000">
    <property type="term" value="F:chondroitin-sulfate-ABC endolyase activity"/>
    <property type="evidence" value="ECO:0007669"/>
    <property type="project" value="InterPro"/>
</dbReference>
<dbReference type="GO" id="GO:0034001">
    <property type="term" value="F:chondroitin-sulfate-ABC exolyase activity"/>
    <property type="evidence" value="ECO:0007669"/>
    <property type="project" value="UniProtKB-EC"/>
</dbReference>
<dbReference type="GO" id="GO:0005975">
    <property type="term" value="P:carbohydrate metabolic process"/>
    <property type="evidence" value="ECO:0007669"/>
    <property type="project" value="InterPro"/>
</dbReference>
<dbReference type="GO" id="GO:0006027">
    <property type="term" value="P:glycosaminoglycan catabolic process"/>
    <property type="evidence" value="ECO:0007669"/>
    <property type="project" value="InterPro"/>
</dbReference>
<dbReference type="Gene3D" id="2.70.98.10">
    <property type="match status" value="1"/>
</dbReference>
<dbReference type="Gene3D" id="1.50.10.100">
    <property type="entry name" value="Chondroitin AC/alginate lyase"/>
    <property type="match status" value="1"/>
</dbReference>
<dbReference type="Gene3D" id="2.60.120.430">
    <property type="entry name" value="Galactose-binding lectin"/>
    <property type="match status" value="1"/>
</dbReference>
<dbReference type="Gene3D" id="2.60.220.10">
    <property type="entry name" value="Polysaccharide lyase family 8-like, C-terminal"/>
    <property type="match status" value="1"/>
</dbReference>
<dbReference type="InterPro" id="IPR039174">
    <property type="entry name" value="Chondroitin_ABC_lyase"/>
</dbReference>
<dbReference type="InterPro" id="IPR008929">
    <property type="entry name" value="Chondroitin_lyas"/>
</dbReference>
<dbReference type="InterPro" id="IPR024200">
    <property type="entry name" value="Chondroitinase_ABC_I"/>
</dbReference>
<dbReference type="InterPro" id="IPR011013">
    <property type="entry name" value="Gal_mutarotase_sf_dom"/>
</dbReference>
<dbReference type="InterPro" id="IPR008979">
    <property type="entry name" value="Galactose-bd-like_sf"/>
</dbReference>
<dbReference type="InterPro" id="IPR014718">
    <property type="entry name" value="GH-type_carb-bd"/>
</dbReference>
<dbReference type="InterPro" id="IPR011071">
    <property type="entry name" value="Lyase_8-like_C"/>
</dbReference>
<dbReference type="InterPro" id="IPR004103">
    <property type="entry name" value="Lyase_8_C"/>
</dbReference>
<dbReference type="InterPro" id="IPR003159">
    <property type="entry name" value="Lyase_8_central_dom"/>
</dbReference>
<dbReference type="InterPro" id="IPR015177">
    <property type="entry name" value="Lyase_catalyt"/>
</dbReference>
<dbReference type="InterPro" id="IPR015176">
    <property type="entry name" value="Lyase_N"/>
</dbReference>
<dbReference type="PANTHER" id="PTHR37322">
    <property type="match status" value="1"/>
</dbReference>
<dbReference type="PANTHER" id="PTHR37322:SF3">
    <property type="entry name" value="CHONDROITIN SULFATE ABC EXOLYASE"/>
    <property type="match status" value="1"/>
</dbReference>
<dbReference type="Pfam" id="PF02278">
    <property type="entry name" value="Lyase_8"/>
    <property type="match status" value="1"/>
</dbReference>
<dbReference type="Pfam" id="PF02884">
    <property type="entry name" value="Lyase_8_C"/>
    <property type="match status" value="1"/>
</dbReference>
<dbReference type="Pfam" id="PF09093">
    <property type="entry name" value="Lyase_catalyt"/>
    <property type="match status" value="1"/>
</dbReference>
<dbReference type="Pfam" id="PF09092">
    <property type="entry name" value="Lyase_N"/>
    <property type="match status" value="1"/>
</dbReference>
<dbReference type="PIRSF" id="PIRSF034515">
    <property type="entry name" value="Chondroitinase"/>
    <property type="match status" value="1"/>
</dbReference>
<dbReference type="SUPFAM" id="SSF48230">
    <property type="entry name" value="Chondroitin AC/alginate lyase"/>
    <property type="match status" value="1"/>
</dbReference>
<dbReference type="SUPFAM" id="SSF74650">
    <property type="entry name" value="Galactose mutarotase-like"/>
    <property type="match status" value="1"/>
</dbReference>
<dbReference type="SUPFAM" id="SSF49785">
    <property type="entry name" value="Galactose-binding domain-like"/>
    <property type="match status" value="1"/>
</dbReference>
<dbReference type="SUPFAM" id="SSF49863">
    <property type="entry name" value="Hyaluronate lyase-like, C-terminal domain"/>
    <property type="match status" value="1"/>
</dbReference>
<sequence length="990" mass="111744">LPTLSHEAFGDIYLFEGELPNTLTTSNNNQLSLSKQHAKDGEQSLKWQYQPQATLTLNNIVNYQDDKNTATPLTFMMWIYNEKPQSSPLTLAFKQNNKIALSFNAELNFTGWRGIAVPFRDMQGSATGQLDQLVITAPNQAGTLFFDQIIMSVPLDNRWAVPDYQTPYVNNAVNTMVSKNWSALLMYDQMFQAHYPTLNFDTEFRDDQTEMASIYQRFEYYQGIRSDKKITPDMLDKHLALWEKLVLTQHADGSITGKALDHPNRQHFMKVEGVFSEGTQKALLDANMLRDVGKTLLQTAIYLRSDSLSATDRKKLEERYLLGTRYVLEQGFTRGSGYQIITHVGYQTRELFDAWFIGRHVLAKNNLLAPTQQAMMWYNATGRIFEKNNEIVDANVDILNTQLQWMIKSLLMLPDYQQRQQALAQLQSWLNKTILSSKGVAGGFKSDGSIFHHSQHYPAYAKDAFGGLAPSVYALSDSPFRLSTSAHERLKDVLLKMRIYTKETQIPVVLSGRHPTGLHKIGIAPFKWMALAGTPDGKQKLDTTLSAAYAKLDNKTHFEGINAESEPVGAWAMNYASMAIQRRASTQSPQQSWLAIARGFSRYLVGNESYENNNRYGRYLQYGQLEIIPADLTQSGFSHAGWDWNRYPGTTTIHLPYNELEAKLNQLPAAGIEEMLLSTESYSGANTLNNNSMFAMKLHGHSKYQQQSLRANKSYFLFDNRVIALGSGIENDDKQHTTETTLFQFAVPKLQSVIINGKKVNQLDTQLTLNNADTLIDPTGNLYKLTKGQTVKFSYQKQHSLDDRNSKPTEQLFATAVISHGKAPSNENYEYAIAIEAQNNKAPEYTVLQHNDQLHAVKDKITQEEGYAFFEATKLKSADATLLSSDAPVMVMAKIQNQQLTLSIVNPDLNLYQGREKDQFDDKGNQIEVSVYSRHWLTAESQSTNSTITVKGIWKLTTPQPGVIIKHHNNNTLITTTTIQATPTVINLVK</sequence>
<organism>
    <name type="scientific">Proteus vulgaris</name>
    <dbReference type="NCBI Taxonomy" id="585"/>
    <lineage>
        <taxon>Bacteria</taxon>
        <taxon>Pseudomonadati</taxon>
        <taxon>Pseudomonadota</taxon>
        <taxon>Gammaproteobacteria</taxon>
        <taxon>Enterobacterales</taxon>
        <taxon>Morganellaceae</taxon>
        <taxon>Proteus</taxon>
    </lineage>
</organism>
<protein>
    <recommendedName>
        <fullName>Chondroitin sulfate ABC exolyase</fullName>
        <ecNumber>4.2.2.21</ecNumber>
    </recommendedName>
    <alternativeName>
        <fullName>Chondroitin ABC exoeliminase</fullName>
    </alternativeName>
    <alternativeName>
        <fullName>Chondroitin ABC lyase II</fullName>
    </alternativeName>
    <alternativeName>
        <fullName>Chondroitin sulfate ABC lyase II</fullName>
        <shortName>ChS ABC lyase II</shortName>
    </alternativeName>
    <alternativeName>
        <fullName>Chondroitinase ABC II</fullName>
        <shortName>cABC II</shortName>
    </alternativeName>
    <alternativeName>
        <fullName>Exochondroitinase ABC</fullName>
    </alternativeName>
</protein>
<accession>C7S340</accession>